<protein>
    <recommendedName>
        <fullName evidence="10">N-acetylornithine carbamoyltransferase</fullName>
        <ecNumber evidence="3">2.1.3.9</ecNumber>
    </recommendedName>
    <alternativeName>
        <fullName evidence="8">N-acetyl-L-ornithine transcarbamylase</fullName>
        <shortName evidence="8">AOTCase</shortName>
        <shortName evidence="8">Acetylornithine transcarbamylase</shortName>
    </alternativeName>
</protein>
<gene>
    <name evidence="7 8" type="primary">argF'</name>
    <name type="ordered locus">XCC2249</name>
</gene>
<sequence length="339" mass="37873">MSLKHFLNTQDWSRAELDALLTQAALFKRNKLGSELKGKSIALVFFNPSMRTRTSFELGAFQLGGHAVVLQPGKDAWPIEFNLGTVMDGDTEEHIAEVARVLGRYVDLIGVRAFPKFVDWSKDREDQVLKSFAKYSPVPVINMETITHPCQELAHALALQEHFGTPDLRGKKYVLTWTYHPKPLNTAVANSALTIATRMGMDVTLLCPTPDYILDERYMDWAAQNVAESGGSLQVSHDIDSAYAGADVVYAKSWGALPFFGNWEPEKPIRDQYQHFIVDERKMALTNNGVFSHCLPLRRNVKATDAVMDSPNCIAIDEAENRLHVQKAIMAALVGQSRP</sequence>
<accession>Q8P8J2</accession>
<organism>
    <name type="scientific">Xanthomonas campestris pv. campestris (strain ATCC 33913 / DSM 3586 / NCPPB 528 / LMG 568 / P 25)</name>
    <dbReference type="NCBI Taxonomy" id="190485"/>
    <lineage>
        <taxon>Bacteria</taxon>
        <taxon>Pseudomonadati</taxon>
        <taxon>Pseudomonadota</taxon>
        <taxon>Gammaproteobacteria</taxon>
        <taxon>Lysobacterales</taxon>
        <taxon>Lysobacteraceae</taxon>
        <taxon>Xanthomonas</taxon>
    </lineage>
</organism>
<keyword id="KW-0002">3D-structure</keyword>
<keyword id="KW-0028">Amino-acid biosynthesis</keyword>
<keyword id="KW-0055">Arginine biosynthesis</keyword>
<keyword id="KW-0963">Cytoplasm</keyword>
<keyword id="KW-1185">Reference proteome</keyword>
<keyword id="KW-0808">Transferase</keyword>
<comment type="function">
    <text evidence="3">Catalyzes the transfer of the carbamoyl group from carbamoyl phosphate to the delta-amino group of N(2)-acetyl-L-ornithine to produce N(2)-acetyl-L-citrulline. This is a step in an alternative arginine biosynthesis pathway. The enzyme has no activity with ornithine.</text>
</comment>
<comment type="catalytic activity">
    <reaction evidence="3">
        <text>N(2)-acetyl-L-ornithine + carbamoyl phosphate = N(2)-acetyl-L-citrulline + phosphate + H(+)</text>
        <dbReference type="Rhea" id="RHEA:18609"/>
        <dbReference type="ChEBI" id="CHEBI:15378"/>
        <dbReference type="ChEBI" id="CHEBI:43474"/>
        <dbReference type="ChEBI" id="CHEBI:57805"/>
        <dbReference type="ChEBI" id="CHEBI:58228"/>
        <dbReference type="ChEBI" id="CHEBI:58765"/>
        <dbReference type="EC" id="2.1.3.9"/>
    </reaction>
    <physiologicalReaction direction="left-to-right" evidence="10">
        <dbReference type="Rhea" id="RHEA:18610"/>
    </physiologicalReaction>
</comment>
<comment type="activity regulation">
    <text evidence="3 6">Carboxylation at Lys-302 increases the catalytic activity of the enzyme (PubMed:20695527). Is potently inhibited by N(alpha)-acetyl-N(delta)-phosphonoacetyl-L-ornithine (PALAO) (PubMed:16585758).</text>
</comment>
<comment type="biophysicochemical properties">
    <kinetics>
        <KM evidence="3">0.01 mM for carbamoyl phosphate</KM>
        <KM evidence="3">1.05 mM for N(2)-acetyl-L-ornithine</KM>
        <Vmax evidence="3">65.28 umol/min/mg enzyme towards N(2)-acetyl-L-ornithine</Vmax>
        <Vmax evidence="3">50.68 umol/min/mg enzyme towards carbamoyl phosphate</Vmax>
    </kinetics>
</comment>
<comment type="pathway">
    <text evidence="10">Amino-acid biosynthesis; L-arginine biosynthesis.</text>
</comment>
<comment type="subunit">
    <text evidence="2 4">Homotrimer.</text>
</comment>
<comment type="subcellular location">
    <subcellularLocation>
        <location evidence="9">Cytoplasm</location>
    </subcellularLocation>
</comment>
<comment type="similarity">
    <text evidence="1 9">Belongs to the aspartate/ornithine carbamoyltransferase superfamily. AOTCase family.</text>
</comment>
<reference key="1">
    <citation type="journal article" date="2002" name="Nature">
        <title>Comparison of the genomes of two Xanthomonas pathogens with differing host specificities.</title>
        <authorList>
            <person name="da Silva A.C.R."/>
            <person name="Ferro J.A."/>
            <person name="Reinach F.C."/>
            <person name="Farah C.S."/>
            <person name="Furlan L.R."/>
            <person name="Quaggio R.B."/>
            <person name="Monteiro-Vitorello C.B."/>
            <person name="Van Sluys M.A."/>
            <person name="Almeida N.F. Jr."/>
            <person name="Alves L.M.C."/>
            <person name="do Amaral A.M."/>
            <person name="Bertolini M.C."/>
            <person name="Camargo L.E.A."/>
            <person name="Camarotte G."/>
            <person name="Cannavan F."/>
            <person name="Cardozo J."/>
            <person name="Chambergo F."/>
            <person name="Ciapina L.P."/>
            <person name="Cicarelli R.M.B."/>
            <person name="Coutinho L.L."/>
            <person name="Cursino-Santos J.R."/>
            <person name="El-Dorry H."/>
            <person name="Faria J.B."/>
            <person name="Ferreira A.J.S."/>
            <person name="Ferreira R.C.C."/>
            <person name="Ferro M.I.T."/>
            <person name="Formighieri E.F."/>
            <person name="Franco M.C."/>
            <person name="Greggio C.C."/>
            <person name="Gruber A."/>
            <person name="Katsuyama A.M."/>
            <person name="Kishi L.T."/>
            <person name="Leite R.P."/>
            <person name="Lemos E.G.M."/>
            <person name="Lemos M.V.F."/>
            <person name="Locali E.C."/>
            <person name="Machado M.A."/>
            <person name="Madeira A.M.B.N."/>
            <person name="Martinez-Rossi N.M."/>
            <person name="Martins E.C."/>
            <person name="Meidanis J."/>
            <person name="Menck C.F.M."/>
            <person name="Miyaki C.Y."/>
            <person name="Moon D.H."/>
            <person name="Moreira L.M."/>
            <person name="Novo M.T.M."/>
            <person name="Okura V.K."/>
            <person name="Oliveira M.C."/>
            <person name="Oliveira V.R."/>
            <person name="Pereira H.A."/>
            <person name="Rossi A."/>
            <person name="Sena J.A.D."/>
            <person name="Silva C."/>
            <person name="de Souza R.F."/>
            <person name="Spinola L.A.F."/>
            <person name="Takita M.A."/>
            <person name="Tamura R.E."/>
            <person name="Teixeira E.C."/>
            <person name="Tezza R.I.D."/>
            <person name="Trindade dos Santos M."/>
            <person name="Truffi D."/>
            <person name="Tsai S.M."/>
            <person name="White F.F."/>
            <person name="Setubal J.C."/>
            <person name="Kitajima J.P."/>
        </authorList>
    </citation>
    <scope>NUCLEOTIDE SEQUENCE [LARGE SCALE GENOMIC DNA]</scope>
    <source>
        <strain>ATCC 33913 / DSM 3586 / NCPPB 528 / LMG 568 / P 25</strain>
    </source>
</reference>
<reference key="2">
    <citation type="journal article" date="2006" name="J. Bacteriol.">
        <title>Acetylornithine transcarbamylase: a novel enzyme in arginine biosynthesis.</title>
        <authorList>
            <person name="Morizono H."/>
            <person name="Cabrera-Luque J."/>
            <person name="Shi D."/>
            <person name="Gallegos R."/>
            <person name="Yamaguchi S."/>
            <person name="Yu X."/>
            <person name="Allewell N.M."/>
            <person name="Malamy M.H."/>
            <person name="Tuchman M."/>
        </authorList>
    </citation>
    <scope>FUNCTION</scope>
    <scope>CATALYTIC ACTIVITY</scope>
    <scope>BIOPHYSICOCHEMICAL PROPERTIES</scope>
    <scope>SUBSTRATE SPECIFICITY</scope>
    <scope>PATHWAY</scope>
    <scope>ACTIVITY REGULATION</scope>
    <source>
        <strain>ATCC 33913 / DSM 3586 / NCPPB 528 / LMG 568 / P 25</strain>
    </source>
</reference>
<reference evidence="11 12" key="3">
    <citation type="journal article" date="2005" name="J. Biol. Chem.">
        <title>Crystal structure of N-acetylornithine transcarbamylase from Xanthomonas campestris: a novel enzyme in a new arginine biosynthetic pathway found in several eubacteria.</title>
        <authorList>
            <person name="Shi D."/>
            <person name="Morizono H."/>
            <person name="Yu X."/>
            <person name="Roth L."/>
            <person name="Caldovic L."/>
            <person name="Allewell N.M."/>
            <person name="Malamy M.H."/>
            <person name="Tuchman M."/>
        </authorList>
    </citation>
    <scope>X-RAY CRYSTALLOGRAPHY (2.2 ANGSTROMS) OF APOENZYME AND COMPLEX WITH N-ACETYLCITRULLINE</scope>
    <scope>SUBUNIT</scope>
    <source>
        <strain>ATCC 33913 / DSM 3586 / NCPPB 528 / LMG 568 / P 25</strain>
    </source>
</reference>
<reference evidence="13 14 15" key="4">
    <citation type="journal article" date="2006" name="Proteins">
        <title>Structures of N-acetylornithine transcarbamoylase from Xanthomonas campestris complexed with substrates and substrate analogs imply mechanisms for substrate binding and catalysis.</title>
        <authorList>
            <person name="Shi D."/>
            <person name="Yu X."/>
            <person name="Roth L."/>
            <person name="Morizono H."/>
            <person name="Tuchman M."/>
            <person name="Allewell N.M."/>
        </authorList>
    </citation>
    <scope>X-RAY CRYSTALLOGRAPHY (1.80 ANGSTROMS) IN COMPLEXES WITH N(2)-ACETYL-L-ORNITHINE; N-ACETYL-L-NORVALINE AND CARBAMOYL PHOSPHATE</scope>
    <scope>SUBUNIT</scope>
    <source>
        <strain>ATCC 33913 / DSM 3586 / NCPPB 528 / LMG 568 / P 25</strain>
    </source>
</reference>
<reference evidence="16 17 18 19" key="5">
    <citation type="journal article" date="2007" name="Protein Sci.">
        <title>A single mutation in the active site swaps the substrate specificity of N-acetyl-L-ornithine transcarbamylase and N-succinyl-L-ornithine transcarbamylase.</title>
        <authorList>
            <person name="Shi D."/>
            <person name="Yu X."/>
            <person name="Cabrera-Luque J."/>
            <person name="Chen T.Y."/>
            <person name="Roth L."/>
            <person name="Morizono H."/>
            <person name="Allewell N.M."/>
            <person name="Tuchman M."/>
        </authorList>
    </citation>
    <scope>X-RAY CRYSTALLOGRAPHY (2.30 ANGSTROMS) OF MUTANTS ALA-92; PRO-92; SER-92 AND VAL-92 IN COMPLEXES WITH N-SUCCINYLNORVALINE AND CARBAMOYL PHOSPHATE</scope>
    <scope>MUTAGENESIS OF GLU-92</scope>
</reference>
<reference evidence="20 21 22 23" key="6">
    <citation type="journal article" date="2010" name="Biochemistry">
        <title>Reversible post-translational carboxylation modulates the enzymatic activity of N-acetyl-L-ornithine transcarbamylase.</title>
        <authorList>
            <person name="Li Y."/>
            <person name="Yu X."/>
            <person name="Ho J."/>
            <person name="Fushman D."/>
            <person name="Allewell N.M."/>
            <person name="Tuchman M."/>
            <person name="Shi D."/>
        </authorList>
    </citation>
    <scope>X-RAY CRYSTALLOGRAPHY (1.85 ANGSTROMS) OF WILD-TYPE AND MUTANTS ALA-302; GLU-302 AND ARG-302 IN COMPLEX WITH THE BISUBSTRATE ANALOG N(DELTA)-PHOSPHONOACETYL-N(ALPHA)-ACETYL-L-ORNITHINE (PALAO)</scope>
    <scope>CARBOXYLATION AT LYS-302</scope>
    <scope>MUTAGENESIS OF LYS-302</scope>
    <scope>ACTIVITY REGULATION</scope>
</reference>
<evidence type="ECO:0000255" key="1">
    <source>
        <dbReference type="HAMAP-Rule" id="MF_02234"/>
    </source>
</evidence>
<evidence type="ECO:0000269" key="2">
    <source>
    </source>
</evidence>
<evidence type="ECO:0000269" key="3">
    <source>
    </source>
</evidence>
<evidence type="ECO:0000269" key="4">
    <source>
    </source>
</evidence>
<evidence type="ECO:0000269" key="5">
    <source>
    </source>
</evidence>
<evidence type="ECO:0000269" key="6">
    <source>
    </source>
</evidence>
<evidence type="ECO:0000303" key="7">
    <source>
    </source>
</evidence>
<evidence type="ECO:0000303" key="8">
    <source>
    </source>
</evidence>
<evidence type="ECO:0000305" key="9"/>
<evidence type="ECO:0000305" key="10">
    <source>
    </source>
</evidence>
<evidence type="ECO:0007744" key="11">
    <source>
        <dbReference type="PDB" id="3KZC"/>
    </source>
</evidence>
<evidence type="ECO:0007744" key="12">
    <source>
        <dbReference type="PDB" id="3KZK"/>
    </source>
</evidence>
<evidence type="ECO:0007744" key="13">
    <source>
        <dbReference type="PDB" id="3KZM"/>
    </source>
</evidence>
<evidence type="ECO:0007744" key="14">
    <source>
        <dbReference type="PDB" id="3KZN"/>
    </source>
</evidence>
<evidence type="ECO:0007744" key="15">
    <source>
        <dbReference type="PDB" id="3KZO"/>
    </source>
</evidence>
<evidence type="ECO:0007744" key="16">
    <source>
        <dbReference type="PDB" id="3L02"/>
    </source>
</evidence>
<evidence type="ECO:0007744" key="17">
    <source>
        <dbReference type="PDB" id="3L04"/>
    </source>
</evidence>
<evidence type="ECO:0007744" key="18">
    <source>
        <dbReference type="PDB" id="3L05"/>
    </source>
</evidence>
<evidence type="ECO:0007744" key="19">
    <source>
        <dbReference type="PDB" id="3L06"/>
    </source>
</evidence>
<evidence type="ECO:0007744" key="20">
    <source>
        <dbReference type="PDB" id="3M4J"/>
    </source>
</evidence>
<evidence type="ECO:0007744" key="21">
    <source>
        <dbReference type="PDB" id="3M4N"/>
    </source>
</evidence>
<evidence type="ECO:0007744" key="22">
    <source>
        <dbReference type="PDB" id="3M5C"/>
    </source>
</evidence>
<evidence type="ECO:0007744" key="23">
    <source>
        <dbReference type="PDB" id="3M5D"/>
    </source>
</evidence>
<evidence type="ECO:0007829" key="24">
    <source>
        <dbReference type="PDB" id="3KZK"/>
    </source>
</evidence>
<evidence type="ECO:0007829" key="25">
    <source>
        <dbReference type="PDB" id="3KZN"/>
    </source>
</evidence>
<proteinExistence type="evidence at protein level"/>
<feature type="chain" id="PRO_0000113268" description="N-acetylornithine carbamoyltransferase">
    <location>
        <begin position="1"/>
        <end position="339"/>
    </location>
</feature>
<feature type="binding site" description="in other chain" evidence="4 5 13 15 16 17 18 19">
    <location>
        <begin position="49"/>
        <end position="52"/>
    </location>
    <ligand>
        <name>carbamoyl phosphate</name>
        <dbReference type="ChEBI" id="CHEBI:58228"/>
        <note>ligand shared between two neighboring subunits</note>
    </ligand>
</feature>
<feature type="binding site" evidence="4 5 13 15 16 17 18 19">
    <location>
        <position position="77"/>
    </location>
    <ligand>
        <name>carbamoyl phosphate</name>
        <dbReference type="ChEBI" id="CHEBI:58228"/>
        <note>ligand shared between two neighboring subunits</note>
    </ligand>
</feature>
<feature type="binding site" description="in other chain" evidence="4 5 13 15 16 17 18 19">
    <location>
        <position position="112"/>
    </location>
    <ligand>
        <name>carbamoyl phosphate</name>
        <dbReference type="ChEBI" id="CHEBI:58228"/>
        <note>ligand shared between two neighboring subunits</note>
    </ligand>
</feature>
<feature type="binding site" evidence="4 14">
    <location>
        <position position="144"/>
    </location>
    <ligand>
        <name>N(2)-acetyl-L-ornithine</name>
        <dbReference type="ChEBI" id="CHEBI:57805"/>
    </ligand>
</feature>
<feature type="binding site" description="in other chain" evidence="4 5 13 15 16 17 18 19">
    <location>
        <begin position="148"/>
        <end position="151"/>
    </location>
    <ligand>
        <name>carbamoyl phosphate</name>
        <dbReference type="ChEBI" id="CHEBI:58228"/>
        <note>ligand shared between two neighboring subunits</note>
    </ligand>
</feature>
<feature type="binding site" evidence="4 14">
    <location>
        <position position="252"/>
    </location>
    <ligand>
        <name>N(2)-acetyl-L-ornithine</name>
        <dbReference type="ChEBI" id="CHEBI:57805"/>
    </ligand>
</feature>
<feature type="binding site" description="in other chain" evidence="4 5 13 15 16 17 18 19">
    <location>
        <begin position="294"/>
        <end position="295"/>
    </location>
    <ligand>
        <name>carbamoyl phosphate</name>
        <dbReference type="ChEBI" id="CHEBI:58228"/>
        <note>ligand shared between two neighboring subunits</note>
    </ligand>
</feature>
<feature type="binding site" evidence="4 14">
    <location>
        <position position="295"/>
    </location>
    <ligand>
        <name>N(2)-acetyl-L-ornithine</name>
        <dbReference type="ChEBI" id="CHEBI:57805"/>
    </ligand>
</feature>
<feature type="binding site" description="in other chain" evidence="4 5 13 15 16 17 18 19">
    <location>
        <position position="322"/>
    </location>
    <ligand>
        <name>carbamoyl phosphate</name>
        <dbReference type="ChEBI" id="CHEBI:58228"/>
        <note>ligand shared between two neighboring subunits</note>
    </ligand>
</feature>
<feature type="site" description="Key residue in conferring substrate specificity for N-acetyl-L-ornithine versus N-succinyl-L-ornithine" evidence="5">
    <location>
        <position position="92"/>
    </location>
</feature>
<feature type="modified residue" description="N6-carboxylysine" evidence="6">
    <location>
        <position position="302"/>
    </location>
</feature>
<feature type="mutagenesis site" description="Generates an enzyme capable of carbamoylation of N-succinyl-L-ornithine while losing its ability to use N-acetyl-L-ornithine as substrate, thus converting it from a N-acetylornithine transcarbamylase (AOTCase) to a N-succinylornithine transcarbamylase (SOTCase)." evidence="5">
    <original>E</original>
    <variation>A</variation>
    <variation>P</variation>
    <variation>S</variation>
    <variation>V</variation>
    <location>
        <position position="92"/>
    </location>
</feature>
<feature type="mutagenesis site" description="Significant decrease in enzymatic activity." evidence="6">
    <original>K</original>
    <variation>A</variation>
    <variation>E</variation>
    <variation>R</variation>
    <location>
        <position position="302"/>
    </location>
</feature>
<feature type="helix" evidence="25">
    <location>
        <begin position="9"/>
        <end position="11"/>
    </location>
</feature>
<feature type="helix" evidence="25">
    <location>
        <begin position="14"/>
        <end position="29"/>
    </location>
</feature>
<feature type="turn" evidence="25">
    <location>
        <begin position="35"/>
        <end position="38"/>
    </location>
</feature>
<feature type="strand" evidence="25">
    <location>
        <begin position="40"/>
        <end position="47"/>
    </location>
</feature>
<feature type="helix" evidence="25">
    <location>
        <begin position="50"/>
        <end position="62"/>
    </location>
</feature>
<feature type="strand" evidence="25">
    <location>
        <begin position="66"/>
        <end position="70"/>
    </location>
</feature>
<feature type="helix" evidence="25">
    <location>
        <begin position="72"/>
        <end position="75"/>
    </location>
</feature>
<feature type="strand" evidence="25">
    <location>
        <begin position="82"/>
        <end position="84"/>
    </location>
</feature>
<feature type="helix" evidence="25">
    <location>
        <begin position="95"/>
        <end position="105"/>
    </location>
</feature>
<feature type="strand" evidence="25">
    <location>
        <begin position="107"/>
        <end position="112"/>
    </location>
</feature>
<feature type="helix" evidence="25">
    <location>
        <begin position="120"/>
        <end position="123"/>
    </location>
</feature>
<feature type="turn" evidence="24">
    <location>
        <begin position="124"/>
        <end position="126"/>
    </location>
</feature>
<feature type="helix" evidence="25">
    <location>
        <begin position="127"/>
        <end position="135"/>
    </location>
</feature>
<feature type="strand" evidence="25">
    <location>
        <begin position="140"/>
        <end position="146"/>
    </location>
</feature>
<feature type="helix" evidence="25">
    <location>
        <begin position="149"/>
        <end position="163"/>
    </location>
</feature>
<feature type="strand" evidence="25">
    <location>
        <begin position="172"/>
        <end position="177"/>
    </location>
</feature>
<feature type="helix" evidence="25">
    <location>
        <begin position="187"/>
        <end position="198"/>
    </location>
</feature>
<feature type="strand" evidence="25">
    <location>
        <begin position="202"/>
        <end position="206"/>
    </location>
</feature>
<feature type="helix" evidence="25">
    <location>
        <begin position="210"/>
        <end position="212"/>
    </location>
</feature>
<feature type="helix" evidence="25">
    <location>
        <begin position="216"/>
        <end position="229"/>
    </location>
</feature>
<feature type="strand" evidence="25">
    <location>
        <begin position="232"/>
        <end position="236"/>
    </location>
</feature>
<feature type="helix" evidence="25">
    <location>
        <begin position="239"/>
        <end position="243"/>
    </location>
</feature>
<feature type="strand" evidence="25">
    <location>
        <begin position="247"/>
        <end position="252"/>
    </location>
</feature>
<feature type="helix" evidence="25">
    <location>
        <begin position="257"/>
        <end position="259"/>
    </location>
</feature>
<feature type="helix" evidence="25">
    <location>
        <begin position="266"/>
        <end position="270"/>
    </location>
</feature>
<feature type="helix" evidence="25">
    <location>
        <begin position="271"/>
        <end position="276"/>
    </location>
</feature>
<feature type="helix" evidence="25">
    <location>
        <begin position="280"/>
        <end position="284"/>
    </location>
</feature>
<feature type="strand" evidence="25">
    <location>
        <begin position="286"/>
        <end position="288"/>
    </location>
</feature>
<feature type="strand" evidence="25">
    <location>
        <begin position="290"/>
        <end position="292"/>
    </location>
</feature>
<feature type="turn" evidence="25">
    <location>
        <begin position="299"/>
        <end position="301"/>
    </location>
</feature>
<feature type="helix" evidence="25">
    <location>
        <begin position="305"/>
        <end position="308"/>
    </location>
</feature>
<feature type="helix" evidence="25">
    <location>
        <begin position="315"/>
        <end position="333"/>
    </location>
</feature>
<dbReference type="EC" id="2.1.3.9" evidence="3"/>
<dbReference type="EMBL" id="AE008922">
    <property type="protein sequence ID" value="AAM41528.1"/>
    <property type="molecule type" value="Genomic_DNA"/>
</dbReference>
<dbReference type="RefSeq" id="NP_637604.1">
    <property type="nucleotide sequence ID" value="NC_003902.1"/>
</dbReference>
<dbReference type="RefSeq" id="WP_011037393.1">
    <property type="nucleotide sequence ID" value="NC_003902.1"/>
</dbReference>
<dbReference type="PDB" id="3KZC">
    <property type="method" value="X-ray"/>
    <property type="resolution" value="2.20 A"/>
    <property type="chains" value="A=1-339"/>
</dbReference>
<dbReference type="PDB" id="3KZK">
    <property type="method" value="X-ray"/>
    <property type="resolution" value="1.90 A"/>
    <property type="chains" value="A=1-339"/>
</dbReference>
<dbReference type="PDB" id="3KZM">
    <property type="method" value="X-ray"/>
    <property type="resolution" value="1.95 A"/>
    <property type="chains" value="A=1-339"/>
</dbReference>
<dbReference type="PDB" id="3KZN">
    <property type="method" value="X-ray"/>
    <property type="resolution" value="1.80 A"/>
    <property type="chains" value="A=1-339"/>
</dbReference>
<dbReference type="PDB" id="3KZO">
    <property type="method" value="X-ray"/>
    <property type="resolution" value="1.90 A"/>
    <property type="chains" value="A=1-339"/>
</dbReference>
<dbReference type="PDB" id="3L02">
    <property type="method" value="X-ray"/>
    <property type="resolution" value="2.30 A"/>
    <property type="chains" value="A=1-339"/>
</dbReference>
<dbReference type="PDB" id="3L04">
    <property type="method" value="X-ray"/>
    <property type="resolution" value="2.50 A"/>
    <property type="chains" value="A=1-339"/>
</dbReference>
<dbReference type="PDB" id="3L05">
    <property type="method" value="X-ray"/>
    <property type="resolution" value="2.80 A"/>
    <property type="chains" value="A=1-339"/>
</dbReference>
<dbReference type="PDB" id="3L06">
    <property type="method" value="X-ray"/>
    <property type="resolution" value="2.81 A"/>
    <property type="chains" value="A=1-339"/>
</dbReference>
<dbReference type="PDB" id="3M4J">
    <property type="method" value="X-ray"/>
    <property type="resolution" value="2.20 A"/>
    <property type="chains" value="A=1-339"/>
</dbReference>
<dbReference type="PDB" id="3M4N">
    <property type="method" value="X-ray"/>
    <property type="resolution" value="1.90 A"/>
    <property type="chains" value="A=1-339"/>
</dbReference>
<dbReference type="PDB" id="3M5C">
    <property type="method" value="X-ray"/>
    <property type="resolution" value="1.85 A"/>
    <property type="chains" value="A=1-339"/>
</dbReference>
<dbReference type="PDB" id="3M5D">
    <property type="method" value="X-ray"/>
    <property type="resolution" value="2.20 A"/>
    <property type="chains" value="A=1-339"/>
</dbReference>
<dbReference type="PDBsum" id="3KZC"/>
<dbReference type="PDBsum" id="3KZK"/>
<dbReference type="PDBsum" id="3KZM"/>
<dbReference type="PDBsum" id="3KZN"/>
<dbReference type="PDBsum" id="3KZO"/>
<dbReference type="PDBsum" id="3L02"/>
<dbReference type="PDBsum" id="3L04"/>
<dbReference type="PDBsum" id="3L05"/>
<dbReference type="PDBsum" id="3L06"/>
<dbReference type="PDBsum" id="3M4J"/>
<dbReference type="PDBsum" id="3M4N"/>
<dbReference type="PDBsum" id="3M5C"/>
<dbReference type="PDBsum" id="3M5D"/>
<dbReference type="SMR" id="Q8P8J2"/>
<dbReference type="STRING" id="190485.XCC2249"/>
<dbReference type="DrugBank" id="DB08554">
    <property type="generic name" value="N-(3-carboxypropanoyl)-L-norvaline"/>
</dbReference>
<dbReference type="DrugBank" id="DB02368">
    <property type="generic name" value="N-Acetyl-L-Citrulline"/>
</dbReference>
<dbReference type="EnsemblBacteria" id="AAM41528">
    <property type="protein sequence ID" value="AAM41528"/>
    <property type="gene ID" value="XCC2249"/>
</dbReference>
<dbReference type="KEGG" id="xcc:XCC2249"/>
<dbReference type="PATRIC" id="fig|190485.4.peg.2399"/>
<dbReference type="eggNOG" id="COG0078">
    <property type="taxonomic scope" value="Bacteria"/>
</dbReference>
<dbReference type="HOGENOM" id="CLU_043846_3_3_6"/>
<dbReference type="OrthoDB" id="9802587at2"/>
<dbReference type="BioCyc" id="MetaCyc:MONOMER-12073"/>
<dbReference type="BRENDA" id="2.1.3.9">
    <property type="organism ID" value="6708"/>
</dbReference>
<dbReference type="UniPathway" id="UPA00068"/>
<dbReference type="EvolutionaryTrace" id="Q8P8J2"/>
<dbReference type="Proteomes" id="UP000001010">
    <property type="component" value="Chromosome"/>
</dbReference>
<dbReference type="GO" id="GO:0005737">
    <property type="term" value="C:cytoplasm"/>
    <property type="evidence" value="ECO:0007669"/>
    <property type="project" value="UniProtKB-SubCell"/>
</dbReference>
<dbReference type="GO" id="GO:0016597">
    <property type="term" value="F:amino acid binding"/>
    <property type="evidence" value="ECO:0007669"/>
    <property type="project" value="InterPro"/>
</dbReference>
<dbReference type="GO" id="GO:0043857">
    <property type="term" value="F:N-acetylornithine carbamoyltransferase activity"/>
    <property type="evidence" value="ECO:0000314"/>
    <property type="project" value="CACAO"/>
</dbReference>
<dbReference type="GO" id="GO:0004585">
    <property type="term" value="F:ornithine carbamoyltransferase activity"/>
    <property type="evidence" value="ECO:0000318"/>
    <property type="project" value="GO_Central"/>
</dbReference>
<dbReference type="GO" id="GO:0042450">
    <property type="term" value="P:arginine biosynthetic process via ornithine"/>
    <property type="evidence" value="ECO:0000318"/>
    <property type="project" value="GO_Central"/>
</dbReference>
<dbReference type="GO" id="GO:0019240">
    <property type="term" value="P:citrulline biosynthetic process"/>
    <property type="evidence" value="ECO:0000318"/>
    <property type="project" value="GO_Central"/>
</dbReference>
<dbReference type="GO" id="GO:0006526">
    <property type="term" value="P:L-arginine biosynthetic process"/>
    <property type="evidence" value="ECO:0007669"/>
    <property type="project" value="UniProtKB-UniRule"/>
</dbReference>
<dbReference type="FunFam" id="3.40.50.1370:FF:000018">
    <property type="entry name" value="Acetylornithine carbamoyltransferase"/>
    <property type="match status" value="1"/>
</dbReference>
<dbReference type="FunFam" id="3.40.50.1370:FF:000020">
    <property type="entry name" value="Acetylornithine carbamoyltransferase"/>
    <property type="match status" value="1"/>
</dbReference>
<dbReference type="Gene3D" id="3.40.50.1370">
    <property type="entry name" value="Aspartate/ornithine carbamoyltransferase"/>
    <property type="match status" value="2"/>
</dbReference>
<dbReference type="HAMAP" id="MF_02234">
    <property type="entry name" value="AOTCase"/>
    <property type="match status" value="1"/>
</dbReference>
<dbReference type="InterPro" id="IPR043695">
    <property type="entry name" value="ArgF"/>
</dbReference>
<dbReference type="InterPro" id="IPR006132">
    <property type="entry name" value="Asp/Orn_carbamoyltranf_P-bd"/>
</dbReference>
<dbReference type="InterPro" id="IPR006130">
    <property type="entry name" value="Asp/Orn_carbamoylTrfase"/>
</dbReference>
<dbReference type="InterPro" id="IPR036901">
    <property type="entry name" value="Asp/Orn_carbamoylTrfase_sf"/>
</dbReference>
<dbReference type="InterPro" id="IPR006131">
    <property type="entry name" value="Asp_carbamoyltransf_Asp/Orn-bd"/>
</dbReference>
<dbReference type="NCBIfam" id="NF003384">
    <property type="entry name" value="PRK04523.1"/>
    <property type="match status" value="1"/>
</dbReference>
<dbReference type="PANTHER" id="PTHR45753">
    <property type="entry name" value="ORNITHINE CARBAMOYLTRANSFERASE, MITOCHONDRIAL"/>
    <property type="match status" value="1"/>
</dbReference>
<dbReference type="PANTHER" id="PTHR45753:SF3">
    <property type="entry name" value="ORNITHINE TRANSCARBAMYLASE, MITOCHONDRIAL"/>
    <property type="match status" value="1"/>
</dbReference>
<dbReference type="Pfam" id="PF00185">
    <property type="entry name" value="OTCace"/>
    <property type="match status" value="1"/>
</dbReference>
<dbReference type="Pfam" id="PF02729">
    <property type="entry name" value="OTCace_N"/>
    <property type="match status" value="1"/>
</dbReference>
<dbReference type="PRINTS" id="PR00100">
    <property type="entry name" value="AOTCASE"/>
</dbReference>
<dbReference type="PRINTS" id="PR00101">
    <property type="entry name" value="ATCASE"/>
</dbReference>
<dbReference type="SUPFAM" id="SSF53671">
    <property type="entry name" value="Aspartate/ornithine carbamoyltransferase"/>
    <property type="match status" value="1"/>
</dbReference>
<name>AOTC_XANCP</name>